<proteinExistence type="predicted"/>
<keyword id="KW-0175">Coiled coil</keyword>
<keyword id="KW-1185">Reference proteome</keyword>
<gene>
    <name type="ORF">DDB_G0277209</name>
</gene>
<accession>Q86K91</accession>
<accession>Q550D1</accession>
<feature type="chain" id="PRO_0000348101" description="Uncharacterized protein DDB_G0277209">
    <location>
        <begin position="1"/>
        <end position="124"/>
    </location>
</feature>
<feature type="region of interest" description="Disordered" evidence="2">
    <location>
        <begin position="62"/>
        <end position="86"/>
    </location>
</feature>
<feature type="coiled-coil region" evidence="1">
    <location>
        <begin position="80"/>
        <end position="112"/>
    </location>
</feature>
<feature type="compositionally biased region" description="Basic residues" evidence="2">
    <location>
        <begin position="62"/>
        <end position="72"/>
    </location>
</feature>
<feature type="compositionally biased region" description="Basic and acidic residues" evidence="2">
    <location>
        <begin position="73"/>
        <end position="83"/>
    </location>
</feature>
<organism>
    <name type="scientific">Dictyostelium discoideum</name>
    <name type="common">Social amoeba</name>
    <dbReference type="NCBI Taxonomy" id="44689"/>
    <lineage>
        <taxon>Eukaryota</taxon>
        <taxon>Amoebozoa</taxon>
        <taxon>Evosea</taxon>
        <taxon>Eumycetozoa</taxon>
        <taxon>Dictyostelia</taxon>
        <taxon>Dictyosteliales</taxon>
        <taxon>Dictyosteliaceae</taxon>
        <taxon>Dictyostelium</taxon>
    </lineage>
</organism>
<name>Y3455_DICDI</name>
<reference key="1">
    <citation type="journal article" date="2002" name="Nature">
        <title>Sequence and analysis of chromosome 2 of Dictyostelium discoideum.</title>
        <authorList>
            <person name="Gloeckner G."/>
            <person name="Eichinger L."/>
            <person name="Szafranski K."/>
            <person name="Pachebat J.A."/>
            <person name="Bankier A.T."/>
            <person name="Dear P.H."/>
            <person name="Lehmann R."/>
            <person name="Baumgart C."/>
            <person name="Parra G."/>
            <person name="Abril J.F."/>
            <person name="Guigo R."/>
            <person name="Kumpf K."/>
            <person name="Tunggal B."/>
            <person name="Cox E.C."/>
            <person name="Quail M.A."/>
            <person name="Platzer M."/>
            <person name="Rosenthal A."/>
            <person name="Noegel A.A."/>
        </authorList>
    </citation>
    <scope>NUCLEOTIDE SEQUENCE [LARGE SCALE GENOMIC DNA]</scope>
    <source>
        <strain>AX4</strain>
    </source>
</reference>
<reference key="2">
    <citation type="journal article" date="2005" name="Nature">
        <title>The genome of the social amoeba Dictyostelium discoideum.</title>
        <authorList>
            <person name="Eichinger L."/>
            <person name="Pachebat J.A."/>
            <person name="Gloeckner G."/>
            <person name="Rajandream M.A."/>
            <person name="Sucgang R."/>
            <person name="Berriman M."/>
            <person name="Song J."/>
            <person name="Olsen R."/>
            <person name="Szafranski K."/>
            <person name="Xu Q."/>
            <person name="Tunggal B."/>
            <person name="Kummerfeld S."/>
            <person name="Madera M."/>
            <person name="Konfortov B.A."/>
            <person name="Rivero F."/>
            <person name="Bankier A.T."/>
            <person name="Lehmann R."/>
            <person name="Hamlin N."/>
            <person name="Davies R."/>
            <person name="Gaudet P."/>
            <person name="Fey P."/>
            <person name="Pilcher K."/>
            <person name="Chen G."/>
            <person name="Saunders D."/>
            <person name="Sodergren E.J."/>
            <person name="Davis P."/>
            <person name="Kerhornou A."/>
            <person name="Nie X."/>
            <person name="Hall N."/>
            <person name="Anjard C."/>
            <person name="Hemphill L."/>
            <person name="Bason N."/>
            <person name="Farbrother P."/>
            <person name="Desany B."/>
            <person name="Just E."/>
            <person name="Morio T."/>
            <person name="Rost R."/>
            <person name="Churcher C.M."/>
            <person name="Cooper J."/>
            <person name="Haydock S."/>
            <person name="van Driessche N."/>
            <person name="Cronin A."/>
            <person name="Goodhead I."/>
            <person name="Muzny D.M."/>
            <person name="Mourier T."/>
            <person name="Pain A."/>
            <person name="Lu M."/>
            <person name="Harper D."/>
            <person name="Lindsay R."/>
            <person name="Hauser H."/>
            <person name="James K.D."/>
            <person name="Quiles M."/>
            <person name="Madan Babu M."/>
            <person name="Saito T."/>
            <person name="Buchrieser C."/>
            <person name="Wardroper A."/>
            <person name="Felder M."/>
            <person name="Thangavelu M."/>
            <person name="Johnson D."/>
            <person name="Knights A."/>
            <person name="Loulseged H."/>
            <person name="Mungall K.L."/>
            <person name="Oliver K."/>
            <person name="Price C."/>
            <person name="Quail M.A."/>
            <person name="Urushihara H."/>
            <person name="Hernandez J."/>
            <person name="Rabbinowitsch E."/>
            <person name="Steffen D."/>
            <person name="Sanders M."/>
            <person name="Ma J."/>
            <person name="Kohara Y."/>
            <person name="Sharp S."/>
            <person name="Simmonds M.N."/>
            <person name="Spiegler S."/>
            <person name="Tivey A."/>
            <person name="Sugano S."/>
            <person name="White B."/>
            <person name="Walker D."/>
            <person name="Woodward J.R."/>
            <person name="Winckler T."/>
            <person name="Tanaka Y."/>
            <person name="Shaulsky G."/>
            <person name="Schleicher M."/>
            <person name="Weinstock G.M."/>
            <person name="Rosenthal A."/>
            <person name="Cox E.C."/>
            <person name="Chisholm R.L."/>
            <person name="Gibbs R.A."/>
            <person name="Loomis W.F."/>
            <person name="Platzer M."/>
            <person name="Kay R.R."/>
            <person name="Williams J.G."/>
            <person name="Dear P.H."/>
            <person name="Noegel A.A."/>
            <person name="Barrell B.G."/>
            <person name="Kuspa A."/>
        </authorList>
    </citation>
    <scope>NUCLEOTIDE SEQUENCE [LARGE SCALE GENOMIC DNA]</scope>
    <source>
        <strain>AX4</strain>
    </source>
</reference>
<dbReference type="EMBL" id="AAFI02000019">
    <property type="protein sequence ID" value="EAL68790.1"/>
    <property type="molecule type" value="Genomic_DNA"/>
</dbReference>
<dbReference type="RefSeq" id="XP_642685.1">
    <property type="nucleotide sequence ID" value="XM_637593.1"/>
</dbReference>
<dbReference type="SMR" id="Q86K91"/>
<dbReference type="PaxDb" id="44689-DDB0233455"/>
<dbReference type="EnsemblProtists" id="EAL68790">
    <property type="protein sequence ID" value="EAL68790"/>
    <property type="gene ID" value="DDB_G0277209"/>
</dbReference>
<dbReference type="GeneID" id="8620874"/>
<dbReference type="KEGG" id="ddi:DDB_G0277209"/>
<dbReference type="dictyBase" id="DDB_G0277209"/>
<dbReference type="VEuPathDB" id="AmoebaDB:DDB_G0277209"/>
<dbReference type="HOGENOM" id="CLU_2008224_0_0_1"/>
<dbReference type="InParanoid" id="Q86K91"/>
<dbReference type="PRO" id="PR:Q86K91"/>
<dbReference type="Proteomes" id="UP000002195">
    <property type="component" value="Chromosome 2"/>
</dbReference>
<sequence>MNQQELIEEINKIESCSLVFERFFGYLPNDIKERKQYILKFNKTLKDEKRKLKCKKTFKGEKKNKKQTFLKHHQSDDHSENKVYKSKKLEKKIQQLNKKKQLIDTKINFLKEIKESNKINKSKI</sequence>
<protein>
    <recommendedName>
        <fullName>Uncharacterized protein DDB_G0277209</fullName>
    </recommendedName>
</protein>
<evidence type="ECO:0000255" key="1"/>
<evidence type="ECO:0000256" key="2">
    <source>
        <dbReference type="SAM" id="MobiDB-lite"/>
    </source>
</evidence>